<name>RECF_HYDCU</name>
<accession>Q31JS3</accession>
<feature type="chain" id="PRO_1000048594" description="DNA replication and repair protein RecF">
    <location>
        <begin position="1"/>
        <end position="362"/>
    </location>
</feature>
<feature type="binding site" evidence="1">
    <location>
        <begin position="31"/>
        <end position="38"/>
    </location>
    <ligand>
        <name>ATP</name>
        <dbReference type="ChEBI" id="CHEBI:30616"/>
    </ligand>
</feature>
<sequence length="362" mass="41404">MSKILQFQLQHFRNIEQASLTFGEGLNLIVGDNAAGKTALIEAIWTLASGRSFRTAKPHQLIQQNQSELVLFGTLTEADRIHKIGLARTSDKVTLKIDGELAKTQADMSAKLPVQLLTPESHRLLEEGPKARRQFMDWGCFHHNADFIHLWRHYQRALKQRNHALKKRLPASQIQLWDAQLVDAAEKIDVIRADYITRLTPYLVEFCQALMPEITVSPECHYRPGWPKTAESYRQLLADNFAKDTLQGHTQYGSHRADIKFRFNGQEALMILSRGQQKLFVCALLLAQATLYQQHSQNPVIMLIDDLPAELDAKHRETLLKLLNLLDIQHILTSTAQDLIPVLEPEKAKIWRIQHGELIEQQ</sequence>
<reference key="1">
    <citation type="journal article" date="2006" name="PLoS Biol.">
        <title>The genome of deep-sea vent chemolithoautotroph Thiomicrospira crunogena XCL-2.</title>
        <authorList>
            <person name="Scott K.M."/>
            <person name="Sievert S.M."/>
            <person name="Abril F.N."/>
            <person name="Ball L.A."/>
            <person name="Barrett C.J."/>
            <person name="Blake R.A."/>
            <person name="Boller A.J."/>
            <person name="Chain P.S.G."/>
            <person name="Clark J.A."/>
            <person name="Davis C.R."/>
            <person name="Detter C."/>
            <person name="Do K.F."/>
            <person name="Dobrinski K.P."/>
            <person name="Faza B.I."/>
            <person name="Fitzpatrick K.A."/>
            <person name="Freyermuth S.K."/>
            <person name="Harmer T.L."/>
            <person name="Hauser L.J."/>
            <person name="Huegler M."/>
            <person name="Kerfeld C.A."/>
            <person name="Klotz M.G."/>
            <person name="Kong W.W."/>
            <person name="Land M."/>
            <person name="Lapidus A."/>
            <person name="Larimer F.W."/>
            <person name="Longo D.L."/>
            <person name="Lucas S."/>
            <person name="Malfatti S.A."/>
            <person name="Massey S.E."/>
            <person name="Martin D.D."/>
            <person name="McCuddin Z."/>
            <person name="Meyer F."/>
            <person name="Moore J.L."/>
            <person name="Ocampo L.H. Jr."/>
            <person name="Paul J.H."/>
            <person name="Paulsen I.T."/>
            <person name="Reep D.K."/>
            <person name="Ren Q."/>
            <person name="Ross R.L."/>
            <person name="Sato P.Y."/>
            <person name="Thomas P."/>
            <person name="Tinkham L.E."/>
            <person name="Zeruth G.T."/>
        </authorList>
    </citation>
    <scope>NUCLEOTIDE SEQUENCE [LARGE SCALE GENOMIC DNA]</scope>
    <source>
        <strain>DSM 25203 / XCL-2</strain>
    </source>
</reference>
<protein>
    <recommendedName>
        <fullName evidence="1">DNA replication and repair protein RecF</fullName>
    </recommendedName>
</protein>
<keyword id="KW-0067">ATP-binding</keyword>
<keyword id="KW-0963">Cytoplasm</keyword>
<keyword id="KW-0227">DNA damage</keyword>
<keyword id="KW-0234">DNA repair</keyword>
<keyword id="KW-0235">DNA replication</keyword>
<keyword id="KW-0238">DNA-binding</keyword>
<keyword id="KW-0547">Nucleotide-binding</keyword>
<keyword id="KW-0742">SOS response</keyword>
<organism>
    <name type="scientific">Hydrogenovibrio crunogenus (strain DSM 25203 / XCL-2)</name>
    <name type="common">Thiomicrospira crunogena</name>
    <dbReference type="NCBI Taxonomy" id="317025"/>
    <lineage>
        <taxon>Bacteria</taxon>
        <taxon>Pseudomonadati</taxon>
        <taxon>Pseudomonadota</taxon>
        <taxon>Gammaproteobacteria</taxon>
        <taxon>Thiotrichales</taxon>
        <taxon>Piscirickettsiaceae</taxon>
        <taxon>Hydrogenovibrio</taxon>
    </lineage>
</organism>
<evidence type="ECO:0000255" key="1">
    <source>
        <dbReference type="HAMAP-Rule" id="MF_00365"/>
    </source>
</evidence>
<comment type="function">
    <text evidence="1">The RecF protein is involved in DNA metabolism; it is required for DNA replication and normal SOS inducibility. RecF binds preferentially to single-stranded, linear DNA. It also seems to bind ATP.</text>
</comment>
<comment type="subcellular location">
    <subcellularLocation>
        <location evidence="1">Cytoplasm</location>
    </subcellularLocation>
</comment>
<comment type="similarity">
    <text evidence="1">Belongs to the RecF family.</text>
</comment>
<gene>
    <name evidence="1" type="primary">recF</name>
    <name type="ordered locus">Tcr_0003</name>
</gene>
<dbReference type="EMBL" id="CP000109">
    <property type="protein sequence ID" value="ABB40600.1"/>
    <property type="molecule type" value="Genomic_DNA"/>
</dbReference>
<dbReference type="SMR" id="Q31JS3"/>
<dbReference type="STRING" id="317025.Tcr_0003"/>
<dbReference type="KEGG" id="tcx:Tcr_0003"/>
<dbReference type="eggNOG" id="COG1195">
    <property type="taxonomic scope" value="Bacteria"/>
</dbReference>
<dbReference type="HOGENOM" id="CLU_040267_0_0_6"/>
<dbReference type="OrthoDB" id="9803889at2"/>
<dbReference type="GO" id="GO:0005737">
    <property type="term" value="C:cytoplasm"/>
    <property type="evidence" value="ECO:0007669"/>
    <property type="project" value="UniProtKB-SubCell"/>
</dbReference>
<dbReference type="GO" id="GO:0005524">
    <property type="term" value="F:ATP binding"/>
    <property type="evidence" value="ECO:0007669"/>
    <property type="project" value="UniProtKB-UniRule"/>
</dbReference>
<dbReference type="GO" id="GO:0003697">
    <property type="term" value="F:single-stranded DNA binding"/>
    <property type="evidence" value="ECO:0007669"/>
    <property type="project" value="UniProtKB-UniRule"/>
</dbReference>
<dbReference type="GO" id="GO:0006260">
    <property type="term" value="P:DNA replication"/>
    <property type="evidence" value="ECO:0007669"/>
    <property type="project" value="UniProtKB-UniRule"/>
</dbReference>
<dbReference type="GO" id="GO:0000731">
    <property type="term" value="P:DNA synthesis involved in DNA repair"/>
    <property type="evidence" value="ECO:0007669"/>
    <property type="project" value="TreeGrafter"/>
</dbReference>
<dbReference type="GO" id="GO:0006302">
    <property type="term" value="P:double-strand break repair"/>
    <property type="evidence" value="ECO:0007669"/>
    <property type="project" value="TreeGrafter"/>
</dbReference>
<dbReference type="GO" id="GO:0009432">
    <property type="term" value="P:SOS response"/>
    <property type="evidence" value="ECO:0007669"/>
    <property type="project" value="UniProtKB-UniRule"/>
</dbReference>
<dbReference type="Gene3D" id="3.40.50.300">
    <property type="entry name" value="P-loop containing nucleotide triphosphate hydrolases"/>
    <property type="match status" value="1"/>
</dbReference>
<dbReference type="Gene3D" id="1.20.1050.90">
    <property type="entry name" value="RecF/RecN/SMC, N-terminal domain"/>
    <property type="match status" value="1"/>
</dbReference>
<dbReference type="HAMAP" id="MF_00365">
    <property type="entry name" value="RecF"/>
    <property type="match status" value="1"/>
</dbReference>
<dbReference type="InterPro" id="IPR001238">
    <property type="entry name" value="DNA-binding_RecF"/>
</dbReference>
<dbReference type="InterPro" id="IPR018078">
    <property type="entry name" value="DNA-binding_RecF_CS"/>
</dbReference>
<dbReference type="InterPro" id="IPR027417">
    <property type="entry name" value="P-loop_NTPase"/>
</dbReference>
<dbReference type="InterPro" id="IPR003395">
    <property type="entry name" value="RecF/RecN/SMC_N"/>
</dbReference>
<dbReference type="InterPro" id="IPR042174">
    <property type="entry name" value="RecF_2"/>
</dbReference>
<dbReference type="NCBIfam" id="TIGR00611">
    <property type="entry name" value="recf"/>
    <property type="match status" value="1"/>
</dbReference>
<dbReference type="PANTHER" id="PTHR32182">
    <property type="entry name" value="DNA REPLICATION AND REPAIR PROTEIN RECF"/>
    <property type="match status" value="1"/>
</dbReference>
<dbReference type="PANTHER" id="PTHR32182:SF0">
    <property type="entry name" value="DNA REPLICATION AND REPAIR PROTEIN RECF"/>
    <property type="match status" value="1"/>
</dbReference>
<dbReference type="Pfam" id="PF02463">
    <property type="entry name" value="SMC_N"/>
    <property type="match status" value="1"/>
</dbReference>
<dbReference type="SUPFAM" id="SSF52540">
    <property type="entry name" value="P-loop containing nucleoside triphosphate hydrolases"/>
    <property type="match status" value="1"/>
</dbReference>
<dbReference type="PROSITE" id="PS00617">
    <property type="entry name" value="RECF_1"/>
    <property type="match status" value="1"/>
</dbReference>
<dbReference type="PROSITE" id="PS00618">
    <property type="entry name" value="RECF_2"/>
    <property type="match status" value="1"/>
</dbReference>
<proteinExistence type="inferred from homology"/>